<organism>
    <name type="scientific">Mus musculus</name>
    <name type="common">Mouse</name>
    <dbReference type="NCBI Taxonomy" id="10090"/>
    <lineage>
        <taxon>Eukaryota</taxon>
        <taxon>Metazoa</taxon>
        <taxon>Chordata</taxon>
        <taxon>Craniata</taxon>
        <taxon>Vertebrata</taxon>
        <taxon>Euteleostomi</taxon>
        <taxon>Mammalia</taxon>
        <taxon>Eutheria</taxon>
        <taxon>Euarchontoglires</taxon>
        <taxon>Glires</taxon>
        <taxon>Rodentia</taxon>
        <taxon>Myomorpha</taxon>
        <taxon>Muroidea</taxon>
        <taxon>Muridae</taxon>
        <taxon>Murinae</taxon>
        <taxon>Mus</taxon>
        <taxon>Mus</taxon>
    </lineage>
</organism>
<protein>
    <recommendedName>
        <fullName>Cyclin-dependent kinase 2-interacting protein</fullName>
    </recommendedName>
</protein>
<keyword id="KW-0007">Acetylation</keyword>
<keyword id="KW-0025">Alternative splicing</keyword>
<keyword id="KW-0131">Cell cycle</keyword>
<keyword id="KW-0132">Cell division</keyword>
<keyword id="KW-0175">Coiled coil</keyword>
<keyword id="KW-0227">DNA damage</keyword>
<keyword id="KW-0234">DNA repair</keyword>
<keyword id="KW-0235">DNA replication</keyword>
<keyword id="KW-0539">Nucleus</keyword>
<keyword id="KW-0597">Phosphoprotein</keyword>
<keyword id="KW-1185">Reference proteome</keyword>
<keyword id="KW-0690">Ribosome biogenesis</keyword>
<dbReference type="EMBL" id="AK004355">
    <property type="protein sequence ID" value="BAB23273.1"/>
    <property type="molecule type" value="mRNA"/>
</dbReference>
<dbReference type="EMBL" id="AK007812">
    <property type="protein sequence ID" value="BAB25277.1"/>
    <property type="molecule type" value="mRNA"/>
</dbReference>
<dbReference type="EMBL" id="AK076126">
    <property type="protein sequence ID" value="BAC36203.1"/>
    <property type="molecule type" value="mRNA"/>
</dbReference>
<dbReference type="EMBL" id="AK032155">
    <property type="protein sequence ID" value="BAC27729.1"/>
    <property type="molecule type" value="mRNA"/>
</dbReference>
<dbReference type="EMBL" id="BC011066">
    <property type="protein sequence ID" value="AAH11066.1"/>
    <property type="molecule type" value="mRNA"/>
</dbReference>
<dbReference type="CCDS" id="CCDS36561.1">
    <molecule id="Q9D0V8-1"/>
</dbReference>
<dbReference type="RefSeq" id="NP_080324.1">
    <molecule id="Q9D0V8-1"/>
    <property type="nucleotide sequence ID" value="NM_026048.4"/>
</dbReference>
<dbReference type="SMR" id="Q9D0V8"/>
<dbReference type="FunCoup" id="Q9D0V8">
    <property type="interactions" value="27"/>
</dbReference>
<dbReference type="STRING" id="10090.ENSMUSP00000035245"/>
<dbReference type="PhosphoSitePlus" id="Q9D0V8"/>
<dbReference type="PaxDb" id="10090-ENSMUSP00000035245"/>
<dbReference type="ProteomicsDB" id="283842">
    <molecule id="Q9D0V8-1"/>
</dbReference>
<dbReference type="ProteomicsDB" id="283843">
    <molecule id="Q9D0V8-2"/>
</dbReference>
<dbReference type="ProteomicsDB" id="283844">
    <molecule id="Q9D0V8-3"/>
</dbReference>
<dbReference type="Pumba" id="Q9D0V8"/>
<dbReference type="Antibodypedia" id="27836">
    <property type="antibodies" value="135 antibodies from 21 providers"/>
</dbReference>
<dbReference type="DNASU" id="67236"/>
<dbReference type="Ensembl" id="ENSMUST00000043716.9">
    <molecule id="Q9D0V8-1"/>
    <property type="protein sequence ID" value="ENSMUSP00000035245.9"/>
    <property type="gene ID" value="ENSMUSG00000021276.11"/>
</dbReference>
<dbReference type="GeneID" id="67236"/>
<dbReference type="KEGG" id="mmu:67236"/>
<dbReference type="UCSC" id="uc007pcb.2">
    <molecule id="Q9D0V8-1"/>
    <property type="organism name" value="mouse"/>
</dbReference>
<dbReference type="UCSC" id="uc007pcd.2">
    <molecule id="Q9D0V8-2"/>
    <property type="organism name" value="mouse"/>
</dbReference>
<dbReference type="UCSC" id="uc007pce.2">
    <molecule id="Q9D0V8-3"/>
    <property type="organism name" value="mouse"/>
</dbReference>
<dbReference type="AGR" id="MGI:1914486"/>
<dbReference type="CTD" id="51550"/>
<dbReference type="MGI" id="MGI:1914486">
    <property type="gene designation" value="Cinp"/>
</dbReference>
<dbReference type="VEuPathDB" id="HostDB:ENSMUSG00000021276"/>
<dbReference type="eggNOG" id="ENOG502S092">
    <property type="taxonomic scope" value="Eukaryota"/>
</dbReference>
<dbReference type="GeneTree" id="ENSGT00390000015784"/>
<dbReference type="HOGENOM" id="CLU_077982_0_0_1"/>
<dbReference type="InParanoid" id="Q9D0V8"/>
<dbReference type="OMA" id="HQPYVET"/>
<dbReference type="OrthoDB" id="17066at2759"/>
<dbReference type="PhylomeDB" id="Q9D0V8"/>
<dbReference type="TreeFam" id="TF329462"/>
<dbReference type="BioGRID-ORCS" id="67236">
    <property type="hits" value="29 hits in 113 CRISPR screens"/>
</dbReference>
<dbReference type="ChiTaRS" id="Cinp">
    <property type="organism name" value="mouse"/>
</dbReference>
<dbReference type="PRO" id="PR:Q9D0V8"/>
<dbReference type="Proteomes" id="UP000000589">
    <property type="component" value="Chromosome 12"/>
</dbReference>
<dbReference type="RNAct" id="Q9D0V8">
    <property type="molecule type" value="protein"/>
</dbReference>
<dbReference type="Bgee" id="ENSMUSG00000021276">
    <property type="expression patterns" value="Expressed in ectoplacental cone and 266 other cell types or tissues"/>
</dbReference>
<dbReference type="ExpressionAtlas" id="Q9D0V8">
    <property type="expression patterns" value="baseline and differential"/>
</dbReference>
<dbReference type="GO" id="GO:0005634">
    <property type="term" value="C:nucleus"/>
    <property type="evidence" value="ECO:0007669"/>
    <property type="project" value="UniProtKB-SubCell"/>
</dbReference>
<dbReference type="GO" id="GO:1990275">
    <property type="term" value="F:preribosome binding"/>
    <property type="evidence" value="ECO:0000250"/>
    <property type="project" value="UniProtKB"/>
</dbReference>
<dbReference type="GO" id="GO:0051301">
    <property type="term" value="P:cell division"/>
    <property type="evidence" value="ECO:0007669"/>
    <property type="project" value="UniProtKB-KW"/>
</dbReference>
<dbReference type="GO" id="GO:0006281">
    <property type="term" value="P:DNA repair"/>
    <property type="evidence" value="ECO:0007669"/>
    <property type="project" value="UniProtKB-KW"/>
</dbReference>
<dbReference type="GO" id="GO:0006260">
    <property type="term" value="P:DNA replication"/>
    <property type="evidence" value="ECO:0007669"/>
    <property type="project" value="UniProtKB-KW"/>
</dbReference>
<dbReference type="GO" id="GO:0042273">
    <property type="term" value="P:ribosomal large subunit biogenesis"/>
    <property type="evidence" value="ECO:0000250"/>
    <property type="project" value="UniProtKB"/>
</dbReference>
<dbReference type="InterPro" id="IPR023250">
    <property type="entry name" value="Cyclin-dep_Kinase_2_interact"/>
</dbReference>
<dbReference type="PANTHER" id="PTHR15827">
    <property type="entry name" value="CYCLIN-DEPENDENT KINASE 2-INTERACTING PROTEIN"/>
    <property type="match status" value="1"/>
</dbReference>
<dbReference type="PANTHER" id="PTHR15827:SF2">
    <property type="entry name" value="CYCLIN-DEPENDENT KINASE 2-INTERACTING PROTEIN"/>
    <property type="match status" value="1"/>
</dbReference>
<dbReference type="PRINTS" id="PR02040">
    <property type="entry name" value="CDK2IP"/>
</dbReference>
<sequence>MEAKTLGIATPRKPVLSVSARKLKDNAADWHNLILKWDSLSDKGFTTASSIANLKVSLLSKEKVELESSSPASMEEEEKTNLDYDKGLEALCEELQAILDGLTKIQMKMEKLSSTTKGICELENYHYREESSRPPLFHTWPTAFFYEVSRRLSEAYKKELLLKHTIGAELAHTADRNLSLTYLSMWLHQPYIESNSKLQLESMLLETGHRAL</sequence>
<reference key="1">
    <citation type="journal article" date="2005" name="Science">
        <title>The transcriptional landscape of the mammalian genome.</title>
        <authorList>
            <person name="Carninci P."/>
            <person name="Kasukawa T."/>
            <person name="Katayama S."/>
            <person name="Gough J."/>
            <person name="Frith M.C."/>
            <person name="Maeda N."/>
            <person name="Oyama R."/>
            <person name="Ravasi T."/>
            <person name="Lenhard B."/>
            <person name="Wells C."/>
            <person name="Kodzius R."/>
            <person name="Shimokawa K."/>
            <person name="Bajic V.B."/>
            <person name="Brenner S.E."/>
            <person name="Batalov S."/>
            <person name="Forrest A.R."/>
            <person name="Zavolan M."/>
            <person name="Davis M.J."/>
            <person name="Wilming L.G."/>
            <person name="Aidinis V."/>
            <person name="Allen J.E."/>
            <person name="Ambesi-Impiombato A."/>
            <person name="Apweiler R."/>
            <person name="Aturaliya R.N."/>
            <person name="Bailey T.L."/>
            <person name="Bansal M."/>
            <person name="Baxter L."/>
            <person name="Beisel K.W."/>
            <person name="Bersano T."/>
            <person name="Bono H."/>
            <person name="Chalk A.M."/>
            <person name="Chiu K.P."/>
            <person name="Choudhary V."/>
            <person name="Christoffels A."/>
            <person name="Clutterbuck D.R."/>
            <person name="Crowe M.L."/>
            <person name="Dalla E."/>
            <person name="Dalrymple B.P."/>
            <person name="de Bono B."/>
            <person name="Della Gatta G."/>
            <person name="di Bernardo D."/>
            <person name="Down T."/>
            <person name="Engstrom P."/>
            <person name="Fagiolini M."/>
            <person name="Faulkner G."/>
            <person name="Fletcher C.F."/>
            <person name="Fukushima T."/>
            <person name="Furuno M."/>
            <person name="Futaki S."/>
            <person name="Gariboldi M."/>
            <person name="Georgii-Hemming P."/>
            <person name="Gingeras T.R."/>
            <person name="Gojobori T."/>
            <person name="Green R.E."/>
            <person name="Gustincich S."/>
            <person name="Harbers M."/>
            <person name="Hayashi Y."/>
            <person name="Hensch T.K."/>
            <person name="Hirokawa N."/>
            <person name="Hill D."/>
            <person name="Huminiecki L."/>
            <person name="Iacono M."/>
            <person name="Ikeo K."/>
            <person name="Iwama A."/>
            <person name="Ishikawa T."/>
            <person name="Jakt M."/>
            <person name="Kanapin A."/>
            <person name="Katoh M."/>
            <person name="Kawasawa Y."/>
            <person name="Kelso J."/>
            <person name="Kitamura H."/>
            <person name="Kitano H."/>
            <person name="Kollias G."/>
            <person name="Krishnan S.P."/>
            <person name="Kruger A."/>
            <person name="Kummerfeld S.K."/>
            <person name="Kurochkin I.V."/>
            <person name="Lareau L.F."/>
            <person name="Lazarevic D."/>
            <person name="Lipovich L."/>
            <person name="Liu J."/>
            <person name="Liuni S."/>
            <person name="McWilliam S."/>
            <person name="Madan Babu M."/>
            <person name="Madera M."/>
            <person name="Marchionni L."/>
            <person name="Matsuda H."/>
            <person name="Matsuzawa S."/>
            <person name="Miki H."/>
            <person name="Mignone F."/>
            <person name="Miyake S."/>
            <person name="Morris K."/>
            <person name="Mottagui-Tabar S."/>
            <person name="Mulder N."/>
            <person name="Nakano N."/>
            <person name="Nakauchi H."/>
            <person name="Ng P."/>
            <person name="Nilsson R."/>
            <person name="Nishiguchi S."/>
            <person name="Nishikawa S."/>
            <person name="Nori F."/>
            <person name="Ohara O."/>
            <person name="Okazaki Y."/>
            <person name="Orlando V."/>
            <person name="Pang K.C."/>
            <person name="Pavan W.J."/>
            <person name="Pavesi G."/>
            <person name="Pesole G."/>
            <person name="Petrovsky N."/>
            <person name="Piazza S."/>
            <person name="Reed J."/>
            <person name="Reid J.F."/>
            <person name="Ring B.Z."/>
            <person name="Ringwald M."/>
            <person name="Rost B."/>
            <person name="Ruan Y."/>
            <person name="Salzberg S.L."/>
            <person name="Sandelin A."/>
            <person name="Schneider C."/>
            <person name="Schoenbach C."/>
            <person name="Sekiguchi K."/>
            <person name="Semple C.A."/>
            <person name="Seno S."/>
            <person name="Sessa L."/>
            <person name="Sheng Y."/>
            <person name="Shibata Y."/>
            <person name="Shimada H."/>
            <person name="Shimada K."/>
            <person name="Silva D."/>
            <person name="Sinclair B."/>
            <person name="Sperling S."/>
            <person name="Stupka E."/>
            <person name="Sugiura K."/>
            <person name="Sultana R."/>
            <person name="Takenaka Y."/>
            <person name="Taki K."/>
            <person name="Tammoja K."/>
            <person name="Tan S.L."/>
            <person name="Tang S."/>
            <person name="Taylor M.S."/>
            <person name="Tegner J."/>
            <person name="Teichmann S.A."/>
            <person name="Ueda H.R."/>
            <person name="van Nimwegen E."/>
            <person name="Verardo R."/>
            <person name="Wei C.L."/>
            <person name="Yagi K."/>
            <person name="Yamanishi H."/>
            <person name="Zabarovsky E."/>
            <person name="Zhu S."/>
            <person name="Zimmer A."/>
            <person name="Hide W."/>
            <person name="Bult C."/>
            <person name="Grimmond S.M."/>
            <person name="Teasdale R.D."/>
            <person name="Liu E.T."/>
            <person name="Brusic V."/>
            <person name="Quackenbush J."/>
            <person name="Wahlestedt C."/>
            <person name="Mattick J.S."/>
            <person name="Hume D.A."/>
            <person name="Kai C."/>
            <person name="Sasaki D."/>
            <person name="Tomaru Y."/>
            <person name="Fukuda S."/>
            <person name="Kanamori-Katayama M."/>
            <person name="Suzuki M."/>
            <person name="Aoki J."/>
            <person name="Arakawa T."/>
            <person name="Iida J."/>
            <person name="Imamura K."/>
            <person name="Itoh M."/>
            <person name="Kato T."/>
            <person name="Kawaji H."/>
            <person name="Kawagashira N."/>
            <person name="Kawashima T."/>
            <person name="Kojima M."/>
            <person name="Kondo S."/>
            <person name="Konno H."/>
            <person name="Nakano K."/>
            <person name="Ninomiya N."/>
            <person name="Nishio T."/>
            <person name="Okada M."/>
            <person name="Plessy C."/>
            <person name="Shibata K."/>
            <person name="Shiraki T."/>
            <person name="Suzuki S."/>
            <person name="Tagami M."/>
            <person name="Waki K."/>
            <person name="Watahiki A."/>
            <person name="Okamura-Oho Y."/>
            <person name="Suzuki H."/>
            <person name="Kawai J."/>
            <person name="Hayashizaki Y."/>
        </authorList>
    </citation>
    <scope>NUCLEOTIDE SEQUENCE [LARGE SCALE MRNA] (ISOFORMS 1; 2 AND 3)</scope>
    <source>
        <strain>C57BL/6J</strain>
        <tissue>Embryo</tissue>
    </source>
</reference>
<reference key="2">
    <citation type="journal article" date="2004" name="Genome Res.">
        <title>The status, quality, and expansion of the NIH full-length cDNA project: the Mammalian Gene Collection (MGC).</title>
        <authorList>
            <consortium name="The MGC Project Team"/>
        </authorList>
    </citation>
    <scope>NUCLEOTIDE SEQUENCE [LARGE SCALE MRNA] (ISOFORM 1)</scope>
    <source>
        <strain>FVB/N</strain>
        <tissue>Mammary tumor</tissue>
    </source>
</reference>
<proteinExistence type="evidence at transcript level"/>
<name>CINP_MOUSE</name>
<accession>Q9D0V8</accession>
<accession>Q8C063</accession>
<accession>Q9D8P9</accession>
<gene>
    <name type="primary">Cinp</name>
</gene>
<feature type="chain" id="PRO_0000326056" description="Cyclin-dependent kinase 2-interacting protein">
    <location>
        <begin position="1"/>
        <end position="212"/>
    </location>
</feature>
<feature type="coiled-coil region" evidence="2">
    <location>
        <begin position="73"/>
        <end position="107"/>
    </location>
</feature>
<feature type="modified residue" description="N-acetylmethionine" evidence="1">
    <location>
        <position position="1"/>
    </location>
</feature>
<feature type="modified residue" description="Phosphoserine" evidence="1">
    <location>
        <position position="69"/>
    </location>
</feature>
<feature type="modified residue" description="Phosphoserine" evidence="1">
    <location>
        <position position="73"/>
    </location>
</feature>
<feature type="splice variant" id="VSP_032527" description="In isoform 3." evidence="3">
    <original>LTKIQMKMEKLSSTTKGICELENYHYREESSRPPLF</original>
    <variation>MVRPKDAGHRHHCLGLLTVGAFRTVGGLSFHLPNKS</variation>
    <location>
        <begin position="102"/>
        <end position="137"/>
    </location>
</feature>
<feature type="splice variant" id="VSP_032525" description="In isoform 2." evidence="3">
    <original>TKIQMKMEKLSSTTK</original>
    <variation>GIQHPVLVCTAPTHK</variation>
    <location>
        <begin position="103"/>
        <end position="117"/>
    </location>
</feature>
<feature type="splice variant" id="VSP_032526" description="In isoform 2." evidence="3">
    <location>
        <begin position="118"/>
        <end position="212"/>
    </location>
</feature>
<feature type="splice variant" id="VSP_032528" description="In isoform 3." evidence="3">
    <location>
        <begin position="138"/>
        <end position="212"/>
    </location>
</feature>
<comment type="function">
    <text evidence="1">Component of the DNA replication complex, which interacts with two kinases, CDK2 and CDC7, thereby providing a functional and physical link between CDK2 and CDC7 during firing of the origins of replication. Regulates ATR-mediated checkpoint signaling in response to DNA damage. Part of the 55LCC heterohexameric ATPase complex which is chromatin-associated and promotes replisome proteostasis to maintain replication fork progression and genome stability. Required for replication fork progression, sister chromatid cohesion, and chromosome stability. The ATPase activity is specifically enhanced by replication fork DNA and is coupled to cysteine protease-dependent cleavage of replisome substrates in response to replication fork damage. Uses ATPase activity to process replisome substrates in S-phase, facilitating their proteolytic turnover from chromatin to ensure DNA replication and mitotic fidelity. As part of 55LCC complex, also involved in the cytoplasmic maturation steps of pre-60S ribosomal particles by promoting the release of shuttling protein RSL24D1/RLP24 from the pre-ribosomal particles.</text>
</comment>
<comment type="subunit">
    <text evidence="1">Homodimer. Part of the 55LCC heterohexameric ATPase complex composed at least of AIRIM, AFG2A, AFG2B and CINP. Interacts with AIRIM. Interacts with CDK2 and CDC7. Interacts with the components of the replication complex, MCM2, MCM3, MCM4, MCM5, MCM6, MCM7 and with ORC2-containing complexes. Interacts with ATRIP. Interacts with CEP152. Associates with pre-60S ribosomal particles.</text>
</comment>
<comment type="subcellular location">
    <subcellularLocation>
        <location evidence="1">Nucleus</location>
    </subcellularLocation>
    <text evidence="1">Binds to nuclear under G1 conditions, and dissociates from chromatin with the start of DNA replication.</text>
</comment>
<comment type="alternative products">
    <event type="alternative splicing"/>
    <isoform>
        <id>Q9D0V8-1</id>
        <name>1</name>
        <sequence type="displayed"/>
    </isoform>
    <isoform>
        <id>Q9D0V8-2</id>
        <name>2</name>
        <sequence type="described" ref="VSP_032525 VSP_032526"/>
    </isoform>
    <isoform>
        <id>Q9D0V8-3</id>
        <name>3</name>
        <sequence type="described" ref="VSP_032527 VSP_032528"/>
    </isoform>
</comment>
<comment type="PTM">
    <text evidence="1">Phosphorylated by CDC7 but not by CDK2.</text>
</comment>
<comment type="similarity">
    <text evidence="4">Belongs to the CINP family.</text>
</comment>
<evidence type="ECO:0000250" key="1">
    <source>
        <dbReference type="UniProtKB" id="Q9BW66"/>
    </source>
</evidence>
<evidence type="ECO:0000255" key="2"/>
<evidence type="ECO:0000303" key="3">
    <source>
    </source>
</evidence>
<evidence type="ECO:0000305" key="4"/>